<gene>
    <name evidence="1" type="primary">secB</name>
    <name type="ordered locus">CGSHiGG_07205</name>
</gene>
<accession>A5UHP8</accession>
<organism>
    <name type="scientific">Haemophilus influenzae (strain PittGG)</name>
    <dbReference type="NCBI Taxonomy" id="374931"/>
    <lineage>
        <taxon>Bacteria</taxon>
        <taxon>Pseudomonadati</taxon>
        <taxon>Pseudomonadota</taxon>
        <taxon>Gammaproteobacteria</taxon>
        <taxon>Pasteurellales</taxon>
        <taxon>Pasteurellaceae</taxon>
        <taxon>Haemophilus</taxon>
    </lineage>
</organism>
<name>SECB_HAEIG</name>
<sequence length="168" mass="19003">MSEQKQDVAATEQQPVLQIQRIYVKDVSFEAPNLPHIFQQEWKPKLGFDLSTETTQVGDDLYEVVLNISVETTLEDSGDVAFICEVKQAGVFTISGLEDVQMAHCLTSQCPNMLFPYARELVSNLVNRGTFPALNLSPVNFDALFVEYMNRQQAENAEEKSEEEQTKH</sequence>
<comment type="function">
    <text evidence="1">One of the proteins required for the normal export of preproteins out of the cell cytoplasm. It is a molecular chaperone that binds to a subset of precursor proteins, maintaining them in a translocation-competent state. It also specifically binds to its receptor SecA.</text>
</comment>
<comment type="subunit">
    <text evidence="1">Homotetramer, a dimer of dimers. One homotetramer interacts with 1 SecA dimer.</text>
</comment>
<comment type="subcellular location">
    <subcellularLocation>
        <location evidence="1">Cytoplasm</location>
    </subcellularLocation>
</comment>
<comment type="similarity">
    <text evidence="1">Belongs to the SecB family.</text>
</comment>
<keyword id="KW-0143">Chaperone</keyword>
<keyword id="KW-0963">Cytoplasm</keyword>
<keyword id="KW-0653">Protein transport</keyword>
<keyword id="KW-0811">Translocation</keyword>
<keyword id="KW-0813">Transport</keyword>
<protein>
    <recommendedName>
        <fullName evidence="1">Protein-export protein SecB</fullName>
    </recommendedName>
</protein>
<proteinExistence type="inferred from homology"/>
<reference key="1">
    <citation type="journal article" date="2007" name="Genome Biol.">
        <title>Characterization and modeling of the Haemophilus influenzae core and supragenomes based on the complete genomic sequences of Rd and 12 clinical nontypeable strains.</title>
        <authorList>
            <person name="Hogg J.S."/>
            <person name="Hu F.Z."/>
            <person name="Janto B."/>
            <person name="Boissy R."/>
            <person name="Hayes J."/>
            <person name="Keefe R."/>
            <person name="Post J.C."/>
            <person name="Ehrlich G.D."/>
        </authorList>
    </citation>
    <scope>NUCLEOTIDE SEQUENCE [LARGE SCALE GENOMIC DNA]</scope>
    <source>
        <strain>PittGG</strain>
    </source>
</reference>
<dbReference type="EMBL" id="CP000672">
    <property type="protein sequence ID" value="ABR00304.1"/>
    <property type="molecule type" value="Genomic_DNA"/>
</dbReference>
<dbReference type="SMR" id="A5UHP8"/>
<dbReference type="KEGG" id="hiq:CGSHiGG_07205"/>
<dbReference type="HOGENOM" id="CLU_111574_1_0_6"/>
<dbReference type="Proteomes" id="UP000001990">
    <property type="component" value="Chromosome"/>
</dbReference>
<dbReference type="GO" id="GO:0005737">
    <property type="term" value="C:cytoplasm"/>
    <property type="evidence" value="ECO:0007669"/>
    <property type="project" value="UniProtKB-SubCell"/>
</dbReference>
<dbReference type="GO" id="GO:0051082">
    <property type="term" value="F:unfolded protein binding"/>
    <property type="evidence" value="ECO:0007669"/>
    <property type="project" value="InterPro"/>
</dbReference>
<dbReference type="GO" id="GO:0006457">
    <property type="term" value="P:protein folding"/>
    <property type="evidence" value="ECO:0007669"/>
    <property type="project" value="UniProtKB-UniRule"/>
</dbReference>
<dbReference type="GO" id="GO:0051262">
    <property type="term" value="P:protein tetramerization"/>
    <property type="evidence" value="ECO:0007669"/>
    <property type="project" value="InterPro"/>
</dbReference>
<dbReference type="GO" id="GO:0015031">
    <property type="term" value="P:protein transport"/>
    <property type="evidence" value="ECO:0007669"/>
    <property type="project" value="UniProtKB-UniRule"/>
</dbReference>
<dbReference type="CDD" id="cd00557">
    <property type="entry name" value="Translocase_SecB"/>
    <property type="match status" value="1"/>
</dbReference>
<dbReference type="Gene3D" id="3.10.420.10">
    <property type="entry name" value="SecB-like"/>
    <property type="match status" value="1"/>
</dbReference>
<dbReference type="HAMAP" id="MF_00821">
    <property type="entry name" value="SecB"/>
    <property type="match status" value="1"/>
</dbReference>
<dbReference type="InterPro" id="IPR003708">
    <property type="entry name" value="SecB"/>
</dbReference>
<dbReference type="InterPro" id="IPR035958">
    <property type="entry name" value="SecB-like_sf"/>
</dbReference>
<dbReference type="NCBIfam" id="NF004393">
    <property type="entry name" value="PRK05751.1-4"/>
    <property type="match status" value="1"/>
</dbReference>
<dbReference type="NCBIfam" id="TIGR00809">
    <property type="entry name" value="secB"/>
    <property type="match status" value="1"/>
</dbReference>
<dbReference type="PANTHER" id="PTHR36918">
    <property type="match status" value="1"/>
</dbReference>
<dbReference type="PANTHER" id="PTHR36918:SF1">
    <property type="entry name" value="PROTEIN-EXPORT PROTEIN SECB"/>
    <property type="match status" value="1"/>
</dbReference>
<dbReference type="Pfam" id="PF02556">
    <property type="entry name" value="SecB"/>
    <property type="match status" value="1"/>
</dbReference>
<dbReference type="PRINTS" id="PR01594">
    <property type="entry name" value="SECBCHAPRONE"/>
</dbReference>
<dbReference type="SUPFAM" id="SSF54611">
    <property type="entry name" value="SecB-like"/>
    <property type="match status" value="1"/>
</dbReference>
<evidence type="ECO:0000255" key="1">
    <source>
        <dbReference type="HAMAP-Rule" id="MF_00821"/>
    </source>
</evidence>
<feature type="chain" id="PRO_1000062477" description="Protein-export protein SecB">
    <location>
        <begin position="1"/>
        <end position="168"/>
    </location>
</feature>